<reference key="1">
    <citation type="journal article" date="2005" name="Nucleic Acids Res.">
        <title>The genome sequence of Xanthomonas oryzae pathovar oryzae KACC10331, the bacterial blight pathogen of rice.</title>
        <authorList>
            <person name="Lee B.-M."/>
            <person name="Park Y.-J."/>
            <person name="Park D.-S."/>
            <person name="Kang H.-W."/>
            <person name="Kim J.-G."/>
            <person name="Song E.-S."/>
            <person name="Park I.-C."/>
            <person name="Yoon U.-H."/>
            <person name="Hahn J.-H."/>
            <person name="Koo B.-S."/>
            <person name="Lee G.-B."/>
            <person name="Kim H."/>
            <person name="Park H.-S."/>
            <person name="Yoon K.-O."/>
            <person name="Kim J.-H."/>
            <person name="Jung C.-H."/>
            <person name="Koh N.-H."/>
            <person name="Seo J.-S."/>
            <person name="Go S.-J."/>
        </authorList>
    </citation>
    <scope>NUCLEOTIDE SEQUENCE [LARGE SCALE GENOMIC DNA]</scope>
    <source>
        <strain>KACC10331 / KXO85</strain>
    </source>
</reference>
<dbReference type="EMBL" id="AE013598">
    <property type="protein sequence ID" value="AAW73591.1"/>
    <property type="status" value="ALT_INIT"/>
    <property type="molecule type" value="Genomic_DNA"/>
</dbReference>
<dbReference type="STRING" id="291331.XOO0337"/>
<dbReference type="KEGG" id="xoo:XOO0337"/>
<dbReference type="HOGENOM" id="CLU_096410_0_0_6"/>
<dbReference type="Proteomes" id="UP000006735">
    <property type="component" value="Chromosome"/>
</dbReference>
<dbReference type="GO" id="GO:0005886">
    <property type="term" value="C:plasma membrane"/>
    <property type="evidence" value="ECO:0007669"/>
    <property type="project" value="UniProtKB-SubCell"/>
</dbReference>
<dbReference type="GO" id="GO:0005384">
    <property type="term" value="F:manganese ion transmembrane transporter activity"/>
    <property type="evidence" value="ECO:0007669"/>
    <property type="project" value="UniProtKB-UniRule"/>
</dbReference>
<dbReference type="HAMAP" id="MF_01521">
    <property type="entry name" value="MntP_pump"/>
    <property type="match status" value="1"/>
</dbReference>
<dbReference type="InterPro" id="IPR003810">
    <property type="entry name" value="Mntp/YtaF"/>
</dbReference>
<dbReference type="InterPro" id="IPR022929">
    <property type="entry name" value="Put_MntP"/>
</dbReference>
<dbReference type="PANTHER" id="PTHR35529">
    <property type="entry name" value="MANGANESE EFFLUX PUMP MNTP-RELATED"/>
    <property type="match status" value="1"/>
</dbReference>
<dbReference type="PANTHER" id="PTHR35529:SF1">
    <property type="entry name" value="MANGANESE EFFLUX PUMP MNTP-RELATED"/>
    <property type="match status" value="1"/>
</dbReference>
<dbReference type="Pfam" id="PF02659">
    <property type="entry name" value="Mntp"/>
    <property type="match status" value="1"/>
</dbReference>
<name>MNTP_XANOR</name>
<keyword id="KW-0997">Cell inner membrane</keyword>
<keyword id="KW-1003">Cell membrane</keyword>
<keyword id="KW-0406">Ion transport</keyword>
<keyword id="KW-0464">Manganese</keyword>
<keyword id="KW-0472">Membrane</keyword>
<keyword id="KW-1185">Reference proteome</keyword>
<keyword id="KW-0812">Transmembrane</keyword>
<keyword id="KW-1133">Transmembrane helix</keyword>
<keyword id="KW-0813">Transport</keyword>
<comment type="function">
    <text evidence="1">Probably functions as a manganese efflux pump.</text>
</comment>
<comment type="subcellular location">
    <subcellularLocation>
        <location evidence="1">Cell inner membrane</location>
        <topology evidence="1">Multi-pass membrane protein</topology>
    </subcellularLocation>
</comment>
<comment type="similarity">
    <text evidence="1">Belongs to the MntP (TC 9.B.29) family.</text>
</comment>
<comment type="sequence caution" evidence="2">
    <conflict type="erroneous initiation">
        <sequence resource="EMBL-CDS" id="AAW73591"/>
    </conflict>
</comment>
<organism>
    <name type="scientific">Xanthomonas oryzae pv. oryzae (strain KACC10331 / KXO85)</name>
    <dbReference type="NCBI Taxonomy" id="291331"/>
    <lineage>
        <taxon>Bacteria</taxon>
        <taxon>Pseudomonadati</taxon>
        <taxon>Pseudomonadota</taxon>
        <taxon>Gammaproteobacteria</taxon>
        <taxon>Lysobacterales</taxon>
        <taxon>Lysobacteraceae</taxon>
        <taxon>Xanthomonas</taxon>
    </lineage>
</organism>
<proteinExistence type="inferred from homology"/>
<feature type="chain" id="PRO_0000155672" description="Putative manganese efflux pump MntP">
    <location>
        <begin position="1"/>
        <end position="194"/>
    </location>
</feature>
<feature type="transmembrane region" description="Helical" evidence="1">
    <location>
        <begin position="3"/>
        <end position="23"/>
    </location>
</feature>
<feature type="transmembrane region" description="Helical" evidence="1">
    <location>
        <begin position="37"/>
        <end position="57"/>
    </location>
</feature>
<feature type="transmembrane region" description="Helical" evidence="1">
    <location>
        <begin position="69"/>
        <end position="89"/>
    </location>
</feature>
<feature type="transmembrane region" description="Helical" evidence="1">
    <location>
        <begin position="110"/>
        <end position="132"/>
    </location>
</feature>
<feature type="transmembrane region" description="Helical" evidence="1">
    <location>
        <begin position="147"/>
        <end position="167"/>
    </location>
</feature>
<feature type="transmembrane region" description="Helical" evidence="1">
    <location>
        <begin position="172"/>
        <end position="192"/>
    </location>
</feature>
<sequence length="194" mass="20008">MSPFSIVLIGFAMSTDAFAAAIGKGAAMRKPQWRDALRAGLIFGCIEAITPVIGWVLGRAASSYLSAYDHWIAFVLLGALGTHMMIAGLRNGPDDANDAEAKTPKRHGLLGLATTGFATSIDAMAVGVSLAFLDVHIGVVAVVVGLCTFSMVTAGVMLGRALGNLIGKRAEILGGLILVIVGSVILYEHLGAAT</sequence>
<accession>Q5H629</accession>
<evidence type="ECO:0000255" key="1">
    <source>
        <dbReference type="HAMAP-Rule" id="MF_01521"/>
    </source>
</evidence>
<evidence type="ECO:0000305" key="2"/>
<gene>
    <name evidence="1" type="primary">mntP</name>
    <name type="ordered locus">XOO0337</name>
</gene>
<protein>
    <recommendedName>
        <fullName evidence="1">Putative manganese efflux pump MntP</fullName>
    </recommendedName>
</protein>